<reference key="1">
    <citation type="journal article" date="2001" name="Proc. Natl. Acad. Sci. U.S.A.">
        <title>Complete genome sequence of Caulobacter crescentus.</title>
        <authorList>
            <person name="Nierman W.C."/>
            <person name="Feldblyum T.V."/>
            <person name="Laub M.T."/>
            <person name="Paulsen I.T."/>
            <person name="Nelson K.E."/>
            <person name="Eisen J.A."/>
            <person name="Heidelberg J.F."/>
            <person name="Alley M.R.K."/>
            <person name="Ohta N."/>
            <person name="Maddock J.R."/>
            <person name="Potocka I."/>
            <person name="Nelson W.C."/>
            <person name="Newton A."/>
            <person name="Stephens C."/>
            <person name="Phadke N.D."/>
            <person name="Ely B."/>
            <person name="DeBoy R.T."/>
            <person name="Dodson R.J."/>
            <person name="Durkin A.S."/>
            <person name="Gwinn M.L."/>
            <person name="Haft D.H."/>
            <person name="Kolonay J.F."/>
            <person name="Smit J."/>
            <person name="Craven M.B."/>
            <person name="Khouri H.M."/>
            <person name="Shetty J."/>
            <person name="Berry K.J."/>
            <person name="Utterback T.R."/>
            <person name="Tran K."/>
            <person name="Wolf A.M."/>
            <person name="Vamathevan J.J."/>
            <person name="Ermolaeva M.D."/>
            <person name="White O."/>
            <person name="Salzberg S.L."/>
            <person name="Venter J.C."/>
            <person name="Shapiro L."/>
            <person name="Fraser C.M."/>
        </authorList>
    </citation>
    <scope>NUCLEOTIDE SEQUENCE [LARGE SCALE GENOMIC DNA]</scope>
    <source>
        <strain>ATCC 19089 / CIP 103742 / CB 15</strain>
    </source>
</reference>
<gene>
    <name evidence="1" type="primary">argB</name>
    <name type="ordered locus">CC_0283</name>
</gene>
<comment type="function">
    <text evidence="1">Catalyzes the ATP-dependent phosphorylation of N-acetyl-L-glutamate.</text>
</comment>
<comment type="catalytic activity">
    <reaction evidence="1">
        <text>N-acetyl-L-glutamate + ATP = N-acetyl-L-glutamyl 5-phosphate + ADP</text>
        <dbReference type="Rhea" id="RHEA:14629"/>
        <dbReference type="ChEBI" id="CHEBI:30616"/>
        <dbReference type="ChEBI" id="CHEBI:44337"/>
        <dbReference type="ChEBI" id="CHEBI:57936"/>
        <dbReference type="ChEBI" id="CHEBI:456216"/>
        <dbReference type="EC" id="2.7.2.8"/>
    </reaction>
</comment>
<comment type="pathway">
    <text evidence="1">Amino-acid biosynthesis; L-arginine biosynthesis; N(2)-acetyl-L-ornithine from L-glutamate: step 2/4.</text>
</comment>
<comment type="subcellular location">
    <subcellularLocation>
        <location evidence="1">Cytoplasm</location>
    </subcellularLocation>
</comment>
<comment type="similarity">
    <text evidence="1">Belongs to the acetylglutamate kinase family. ArgB subfamily.</text>
</comment>
<protein>
    <recommendedName>
        <fullName evidence="1">Acetylglutamate kinase</fullName>
        <ecNumber evidence="1">2.7.2.8</ecNumber>
    </recommendedName>
    <alternativeName>
        <fullName evidence="1">N-acetyl-L-glutamate 5-phosphotransferase</fullName>
    </alternativeName>
    <alternativeName>
        <fullName evidence="1">NAG kinase</fullName>
        <shortName evidence="1">NAGK</shortName>
    </alternativeName>
</protein>
<organism>
    <name type="scientific">Caulobacter vibrioides (strain ATCC 19089 / CIP 103742 / CB 15)</name>
    <name type="common">Caulobacter crescentus</name>
    <dbReference type="NCBI Taxonomy" id="190650"/>
    <lineage>
        <taxon>Bacteria</taxon>
        <taxon>Pseudomonadati</taxon>
        <taxon>Pseudomonadota</taxon>
        <taxon>Alphaproteobacteria</taxon>
        <taxon>Caulobacterales</taxon>
        <taxon>Caulobacteraceae</taxon>
        <taxon>Caulobacter</taxon>
    </lineage>
</organism>
<proteinExistence type="inferred from homology"/>
<accession>Q9ABE5</accession>
<name>ARGB_CAUVC</name>
<feature type="chain" id="PRO_0000112604" description="Acetylglutamate kinase">
    <location>
        <begin position="1"/>
        <end position="304"/>
    </location>
</feature>
<feature type="binding site" evidence="1">
    <location>
        <begin position="69"/>
        <end position="70"/>
    </location>
    <ligand>
        <name>substrate</name>
    </ligand>
</feature>
<feature type="binding site" evidence="1">
    <location>
        <position position="91"/>
    </location>
    <ligand>
        <name>substrate</name>
    </ligand>
</feature>
<feature type="binding site" evidence="1">
    <location>
        <position position="202"/>
    </location>
    <ligand>
        <name>substrate</name>
    </ligand>
</feature>
<feature type="site" description="Transition state stabilizer" evidence="1">
    <location>
        <position position="34"/>
    </location>
</feature>
<feature type="site" description="Transition state stabilizer" evidence="1">
    <location>
        <position position="262"/>
    </location>
</feature>
<evidence type="ECO:0000255" key="1">
    <source>
        <dbReference type="HAMAP-Rule" id="MF_00082"/>
    </source>
</evidence>
<dbReference type="EC" id="2.7.2.8" evidence="1"/>
<dbReference type="EMBL" id="AE005673">
    <property type="protein sequence ID" value="AAK22270.1"/>
    <property type="molecule type" value="Genomic_DNA"/>
</dbReference>
<dbReference type="PIR" id="B87284">
    <property type="entry name" value="B87284"/>
</dbReference>
<dbReference type="RefSeq" id="NP_419102.1">
    <property type="nucleotide sequence ID" value="NC_002696.2"/>
</dbReference>
<dbReference type="RefSeq" id="WP_010918172.1">
    <property type="nucleotide sequence ID" value="NC_002696.2"/>
</dbReference>
<dbReference type="SMR" id="Q9ABE5"/>
<dbReference type="STRING" id="190650.CC_0283"/>
<dbReference type="EnsemblBacteria" id="AAK22270">
    <property type="protein sequence ID" value="AAK22270"/>
    <property type="gene ID" value="CC_0283"/>
</dbReference>
<dbReference type="KEGG" id="ccr:CC_0283"/>
<dbReference type="PATRIC" id="fig|190650.5.peg.281"/>
<dbReference type="eggNOG" id="COG0548">
    <property type="taxonomic scope" value="Bacteria"/>
</dbReference>
<dbReference type="HOGENOM" id="CLU_053680_0_0_5"/>
<dbReference type="BioCyc" id="CAULO:CC0283-MONOMER"/>
<dbReference type="UniPathway" id="UPA00068">
    <property type="reaction ID" value="UER00107"/>
</dbReference>
<dbReference type="Proteomes" id="UP000001816">
    <property type="component" value="Chromosome"/>
</dbReference>
<dbReference type="GO" id="GO:0005737">
    <property type="term" value="C:cytoplasm"/>
    <property type="evidence" value="ECO:0007669"/>
    <property type="project" value="UniProtKB-SubCell"/>
</dbReference>
<dbReference type="GO" id="GO:0003991">
    <property type="term" value="F:acetylglutamate kinase activity"/>
    <property type="evidence" value="ECO:0007669"/>
    <property type="project" value="UniProtKB-UniRule"/>
</dbReference>
<dbReference type="GO" id="GO:0005524">
    <property type="term" value="F:ATP binding"/>
    <property type="evidence" value="ECO:0007669"/>
    <property type="project" value="UniProtKB-UniRule"/>
</dbReference>
<dbReference type="GO" id="GO:0042450">
    <property type="term" value="P:arginine biosynthetic process via ornithine"/>
    <property type="evidence" value="ECO:0007669"/>
    <property type="project" value="UniProtKB-UniRule"/>
</dbReference>
<dbReference type="GO" id="GO:0006526">
    <property type="term" value="P:L-arginine biosynthetic process"/>
    <property type="evidence" value="ECO:0007669"/>
    <property type="project" value="UniProtKB-UniPathway"/>
</dbReference>
<dbReference type="CDD" id="cd04250">
    <property type="entry name" value="AAK_NAGK-C"/>
    <property type="match status" value="1"/>
</dbReference>
<dbReference type="FunFam" id="3.40.1160.10:FF:000004">
    <property type="entry name" value="Acetylglutamate kinase"/>
    <property type="match status" value="1"/>
</dbReference>
<dbReference type="Gene3D" id="3.40.1160.10">
    <property type="entry name" value="Acetylglutamate kinase-like"/>
    <property type="match status" value="1"/>
</dbReference>
<dbReference type="HAMAP" id="MF_00082">
    <property type="entry name" value="ArgB"/>
    <property type="match status" value="1"/>
</dbReference>
<dbReference type="InterPro" id="IPR036393">
    <property type="entry name" value="AceGlu_kinase-like_sf"/>
</dbReference>
<dbReference type="InterPro" id="IPR004662">
    <property type="entry name" value="AcgluKinase_fam"/>
</dbReference>
<dbReference type="InterPro" id="IPR037528">
    <property type="entry name" value="ArgB"/>
</dbReference>
<dbReference type="InterPro" id="IPR001048">
    <property type="entry name" value="Asp/Glu/Uridylate_kinase"/>
</dbReference>
<dbReference type="InterPro" id="IPR001057">
    <property type="entry name" value="Glu/AcGlu_kinase"/>
</dbReference>
<dbReference type="InterPro" id="IPR041727">
    <property type="entry name" value="NAGK-C"/>
</dbReference>
<dbReference type="NCBIfam" id="TIGR00761">
    <property type="entry name" value="argB"/>
    <property type="match status" value="1"/>
</dbReference>
<dbReference type="PANTHER" id="PTHR23342">
    <property type="entry name" value="N-ACETYLGLUTAMATE SYNTHASE"/>
    <property type="match status" value="1"/>
</dbReference>
<dbReference type="PANTHER" id="PTHR23342:SF0">
    <property type="entry name" value="N-ACETYLGLUTAMATE SYNTHASE, MITOCHONDRIAL"/>
    <property type="match status" value="1"/>
</dbReference>
<dbReference type="Pfam" id="PF00696">
    <property type="entry name" value="AA_kinase"/>
    <property type="match status" value="1"/>
</dbReference>
<dbReference type="PIRSF" id="PIRSF000728">
    <property type="entry name" value="NAGK"/>
    <property type="match status" value="1"/>
</dbReference>
<dbReference type="PRINTS" id="PR00474">
    <property type="entry name" value="GLU5KINASE"/>
</dbReference>
<dbReference type="SUPFAM" id="SSF53633">
    <property type="entry name" value="Carbamate kinase-like"/>
    <property type="match status" value="1"/>
</dbReference>
<sequence length="304" mass="32159">MTDVAEEAGWATAKTLAEALPYIQIYDRETVVIKYGGHAMGQEDVAKVFAADAVLLKLLGVHPVVVHGGGPQISRMLDKAGVKSTFVDGLRVTDEATMEVAEMVLSGAINKEIANWITLAGAEADVRGVGLSGKDARLITAEKVTRTKKDPDSNIEQAVDLGFVGEPTKVDPQLIEALLTSEHDYIPVVAPIGVSPDGDTFNINADTVAGALAGALKAKRMLMLTDIKGVLDGNGELIREMTIEQARALIDTGVATGGMIPKLENAIHAIESGVEAVVILDGRRPHAMLVELFSEYGAGTLIKR</sequence>
<keyword id="KW-0028">Amino-acid biosynthesis</keyword>
<keyword id="KW-0055">Arginine biosynthesis</keyword>
<keyword id="KW-0067">ATP-binding</keyword>
<keyword id="KW-0963">Cytoplasm</keyword>
<keyword id="KW-0418">Kinase</keyword>
<keyword id="KW-0547">Nucleotide-binding</keyword>
<keyword id="KW-1185">Reference proteome</keyword>
<keyword id="KW-0808">Transferase</keyword>